<evidence type="ECO:0000250" key="1">
    <source>
        <dbReference type="UniProtKB" id="L0E2Z4"/>
    </source>
</evidence>
<evidence type="ECO:0000250" key="2">
    <source>
        <dbReference type="UniProtKB" id="O93868"/>
    </source>
</evidence>
<evidence type="ECO:0000250" key="3">
    <source>
        <dbReference type="UniProtKB" id="Q4WAY4"/>
    </source>
</evidence>
<evidence type="ECO:0000303" key="4">
    <source>
    </source>
</evidence>
<evidence type="ECO:0000305" key="5"/>
<evidence type="ECO:0000305" key="6">
    <source>
    </source>
</evidence>
<reference key="1">
    <citation type="journal article" date="2014" name="BMC Genomics">
        <title>Comparative genome sequencing reveals chemotype-specific gene clusters in the toxigenic black mold Stachybotrys.</title>
        <authorList>
            <person name="Semeiks J."/>
            <person name="Borek D."/>
            <person name="Otwinowski Z."/>
            <person name="Grishin N.V."/>
        </authorList>
    </citation>
    <scope>NUCLEOTIDE SEQUENCE [LARGE SCALE GENOMIC DNA]</scope>
    <scope>IDENTIFICATION</scope>
    <scope>FUNCTION</scope>
    <source>
        <strain>IBT 40285</strain>
    </source>
</reference>
<comment type="function">
    <text evidence="3 6">Short-chain dehydrogenase/reductase; part of the core atranone cluster (CAC) which products are predicted to catalyze most or all steps of mycotoxin atranone synthesis, starting from geranylgeranyl pyrophosphate (GGPP) (PubMed:25015739). The initial cyclization of GGPP to dolabellane is probably performed by the terpene cyclase ATR13 (PubMed:25015739). The Baeyer-Villiger oxidation near the end of the atranone synthesis, which converts atranones D and E to atranones F and G is predicted to be catalyzed by the monooxygenase ATR8 (PubMed:25015739). Of the CAC's other predicted gene products, the reducing PKS ATR6 might synthesize a polyketide chain (PubMed:25015739). This polyketide is probably transferred onto the atranone backbone by the polyketide transferase ATR5 (By similarity). Other predicted CAC products include 4 oxygenases (ATR2, ATR3, ATR4, and ATR14), 3 short-chain reductases (ATR7, ATR9, and ATR10), and a methyltransferase (ATR12) (PubMed:25015739). These may all be involved in the various steps of atranone biosynthesis, although their specific roles must await experimental determination (PubMed:25015739).</text>
</comment>
<comment type="pathway">
    <text evidence="6">Mycotoxin biosynthesis.</text>
</comment>
<comment type="similarity">
    <text evidence="5">Belongs to the short-chain dehydrogenases/reductases (SDR) family.</text>
</comment>
<dbReference type="EC" id="1.-.-.-" evidence="6"/>
<dbReference type="EMBL" id="KL659308">
    <property type="protein sequence ID" value="KFA70087.1"/>
    <property type="molecule type" value="Genomic_DNA"/>
</dbReference>
<dbReference type="SMR" id="A0A084R1K2"/>
<dbReference type="STRING" id="1283841.A0A084R1K2"/>
<dbReference type="HOGENOM" id="CLU_010194_1_2_1"/>
<dbReference type="InParanoid" id="A0A084R1K2"/>
<dbReference type="OMA" id="HIVHSVS"/>
<dbReference type="OrthoDB" id="294295at2759"/>
<dbReference type="Proteomes" id="UP000028524">
    <property type="component" value="Unassembled WGS sequence"/>
</dbReference>
<dbReference type="GO" id="GO:0004497">
    <property type="term" value="F:monooxygenase activity"/>
    <property type="evidence" value="ECO:0007669"/>
    <property type="project" value="UniProtKB-KW"/>
</dbReference>
<dbReference type="CDD" id="cd05233">
    <property type="entry name" value="SDR_c"/>
    <property type="match status" value="1"/>
</dbReference>
<dbReference type="Gene3D" id="3.40.50.720">
    <property type="entry name" value="NAD(P)-binding Rossmann-like Domain"/>
    <property type="match status" value="1"/>
</dbReference>
<dbReference type="InterPro" id="IPR036291">
    <property type="entry name" value="NAD(P)-bd_dom_sf"/>
</dbReference>
<dbReference type="InterPro" id="IPR002347">
    <property type="entry name" value="SDR_fam"/>
</dbReference>
<dbReference type="InterPro" id="IPR051122">
    <property type="entry name" value="SDR_superfamily_enzyme"/>
</dbReference>
<dbReference type="PANTHER" id="PTHR43477">
    <property type="entry name" value="DIHYDROANTICAPSIN 7-DEHYDROGENASE"/>
    <property type="match status" value="1"/>
</dbReference>
<dbReference type="PANTHER" id="PTHR43477:SF1">
    <property type="entry name" value="DIHYDROANTICAPSIN 7-DEHYDROGENASE"/>
    <property type="match status" value="1"/>
</dbReference>
<dbReference type="Pfam" id="PF23441">
    <property type="entry name" value="SDR"/>
    <property type="match status" value="1"/>
</dbReference>
<dbReference type="PRINTS" id="PR00081">
    <property type="entry name" value="GDHRDH"/>
</dbReference>
<dbReference type="SUPFAM" id="SSF51735">
    <property type="entry name" value="NAD(P)-binding Rossmann-fold domains"/>
    <property type="match status" value="1"/>
</dbReference>
<name>ATR9_STAC4</name>
<protein>
    <recommendedName>
        <fullName evidence="4">Short-chain dehydrogenase/reductase ATR9</fullName>
        <ecNumber evidence="6">1.-.-.-</ecNumber>
    </recommendedName>
    <alternativeName>
        <fullName evidence="4">Core atranone cluster (CAC) protein 9</fullName>
    </alternativeName>
</protein>
<keyword id="KW-0503">Monooxygenase</keyword>
<keyword id="KW-0521">NADP</keyword>
<keyword id="KW-0560">Oxidoreductase</keyword>
<keyword id="KW-1185">Reference proteome</keyword>
<organism>
    <name type="scientific">Stachybotrys chlorohalonatus (strain IBT 40285)</name>
    <dbReference type="NCBI Taxonomy" id="1283841"/>
    <lineage>
        <taxon>Eukaryota</taxon>
        <taxon>Fungi</taxon>
        <taxon>Dikarya</taxon>
        <taxon>Ascomycota</taxon>
        <taxon>Pezizomycotina</taxon>
        <taxon>Sordariomycetes</taxon>
        <taxon>Hypocreomycetidae</taxon>
        <taxon>Hypocreales</taxon>
        <taxon>Stachybotryaceae</taxon>
        <taxon>Stachybotrys</taxon>
    </lineage>
</organism>
<gene>
    <name evidence="4" type="primary">ATR9</name>
    <name type="ORF">S40285_03334</name>
</gene>
<feature type="chain" id="PRO_0000442405" description="Short-chain dehydrogenase/reductase ATR9">
    <location>
        <begin position="1"/>
        <end position="253"/>
    </location>
</feature>
<feature type="active site" description="Proton donor" evidence="2">
    <location>
        <position position="147"/>
    </location>
</feature>
<feature type="binding site" evidence="1">
    <location>
        <position position="15"/>
    </location>
    <ligand>
        <name>NADP(+)</name>
        <dbReference type="ChEBI" id="CHEBI:58349"/>
    </ligand>
</feature>
<feature type="binding site" evidence="1">
    <location>
        <position position="16"/>
    </location>
    <ligand>
        <name>NADP(+)</name>
        <dbReference type="ChEBI" id="CHEBI:58349"/>
    </ligand>
</feature>
<feature type="binding site" evidence="1">
    <location>
        <position position="18"/>
    </location>
    <ligand>
        <name>NADP(+)</name>
        <dbReference type="ChEBI" id="CHEBI:58349"/>
    </ligand>
</feature>
<feature type="binding site" evidence="1">
    <location>
        <position position="38"/>
    </location>
    <ligand>
        <name>NADP(+)</name>
        <dbReference type="ChEBI" id="CHEBI:58349"/>
    </ligand>
</feature>
<feature type="binding site" evidence="1">
    <location>
        <position position="39"/>
    </location>
    <ligand>
        <name>NADP(+)</name>
        <dbReference type="ChEBI" id="CHEBI:58349"/>
    </ligand>
</feature>
<feature type="binding site" evidence="1">
    <location>
        <position position="42"/>
    </location>
    <ligand>
        <name>NADP(+)</name>
        <dbReference type="ChEBI" id="CHEBI:58349"/>
    </ligand>
</feature>
<feature type="binding site" evidence="1">
    <location>
        <position position="65"/>
    </location>
    <ligand>
        <name>NADP(+)</name>
        <dbReference type="ChEBI" id="CHEBI:58349"/>
    </ligand>
</feature>
<feature type="binding site" evidence="1">
    <location>
        <position position="129"/>
    </location>
    <ligand>
        <name>NADP(+)</name>
        <dbReference type="ChEBI" id="CHEBI:58349"/>
    </ligand>
</feature>
<feature type="binding site" evidence="1">
    <location>
        <position position="194"/>
    </location>
    <ligand>
        <name>NADP(+)</name>
        <dbReference type="ChEBI" id="CHEBI:58349"/>
    </ligand>
</feature>
<proteinExistence type="inferred from homology"/>
<accession>A0A084R1K2</accession>
<sequence length="253" mass="26317">MPTIRGQSILIIGGSSGIGAAVAKYACGDGVKVSVASSNKGRVEKALKKIQALVPASEILGFTVDLSQYDLESRLEKLFKEVVDATGGPLDHVVMTAGTGNMVSLSEYTAKAFQESAPLHFIAPLMVGKVAPRFMNRHWKSSITFTSGAFGKKPAKGYCVIASAVGALDAATRALALELAPIRVNAVSPGPTVTEMFGPPSEALDKAVAAMGAQSLLGKLGRPEDVAEAYIYLMRDANTTGTIVDSNGGAFLQ</sequence>